<sequence>MELYHLTLQRQSNYVHSVKGSFLGRDSNELVVATQTHIELYDFAGKVRRKVGNDIVLFTSLLALDTIWDEDGLAHLVMLGQNGNLVVAKFALSGDRLQLDSEFLYRFDNSVEKTWLPKVVANKSSILVTWGLTQKIVVPVSWSQEPRFRSPIFFSNAEHSVVLELCSLTSFEDHYVSLELDTRLKVYKLNFLFFDRNLQSLLLTNSYNLKSNEVDDRPNFITDIPDLAVYGVSTAINKSTSKKNPFVLIGFNKHILIKDMMGIYSLKCEFPADIMESLPMDKKLLIVASDLQILKNNVGFLLLLQTNTGHLFKVIIFPNEEDRNRPIAKLGYFDKVKHISNSSKLHIFNNGSMYINSQFNYDHVYLNFESIGDNDENYDKIDNENENISVISKHTNINPIALNLCLMENMPLTFMHFQGGNRTTDSEKVNIIRNAIPLKEYVSSPLPQGVSNIFTIKTQYQSYHSFIFLTMINFTTVILKIADDSIEQYIPASDTFKLKDDMTIHVATMGDNSIIQVCKDEFRQILLDSKDEENFKMNLKWYPPAGVSILSAVSNFSQLILALSNNEIVYLQLENNTLIEYKNRPELPDVITSLALLNDNTKKSEILAVGTSDNMVNVLSLEIVDEAISFETVVFQALDAIPSSLLILNQGHKLVNLHIGVEDGSYLVNRLDLRNMSINNILRKQLGTRSIKALNHIGVDLRNDTLQYDDDESGNSKENTLKNRGEKTSVVVIHGNRTWANYSSHSNMYIRPLYLKDSRRLITTKEFSSASIDSGGSCCSLSASGSLLIGGFDFLPWVGNWFSKDAVAIQLSDDSSTAVSGGDSTDGSDDDEDYDEEKLEEFDIHCRKFLNFNDQGKSTVLVFENTIDDKAESTLCIINKKDISPMTISDDGKSVFRKSLPFKTRDVALSKLGTKKWYLFVLSTSSTIFTYGIKTSTDGTVDLKMELIHETHFDNEVFCIKVFRDMLIVPQYNRLLFCEVGKTKLLNKMIGPAVDYVEKITVLDCWADDRIAIGDFRNSVSLLQFSSSHEVNVIANDICTRDVTAIKFLDRSTIIGGDKFGSVWVLRLSIQDEKILQSCDNNKVELQQHLLREKGTLREKAPNILNTYFKLDLVNQFFINDIVTGFSVEEITQASDRPIIFYYGIQGTIGCLLPLLVKSEISKLRSIEQMMKSADETWFLKNELLNEKIGIELEDKENHEYDLAVHSVIDHEVGRTAGNWASSSGFIEGKFTTLDCDHTAYRSYYAPVKNVIDGDICETYLNLTDDLKAYLTKHASPDNDLTTIVQTLMKVRNNFI</sequence>
<protein>
    <recommendedName>
        <fullName>Pre-mRNA-splicing factor RSE1</fullName>
    </recommendedName>
</protein>
<organism>
    <name type="scientific">Candida glabrata (strain ATCC 2001 / BCRC 20586 / JCM 3761 / NBRC 0622 / NRRL Y-65 / CBS 138)</name>
    <name type="common">Yeast</name>
    <name type="synonym">Nakaseomyces glabratus</name>
    <dbReference type="NCBI Taxonomy" id="284593"/>
    <lineage>
        <taxon>Eukaryota</taxon>
        <taxon>Fungi</taxon>
        <taxon>Dikarya</taxon>
        <taxon>Ascomycota</taxon>
        <taxon>Saccharomycotina</taxon>
        <taxon>Saccharomycetes</taxon>
        <taxon>Saccharomycetales</taxon>
        <taxon>Saccharomycetaceae</taxon>
        <taxon>Nakaseomyces</taxon>
    </lineage>
</organism>
<evidence type="ECO:0000250" key="1"/>
<evidence type="ECO:0000305" key="2"/>
<proteinExistence type="inferred from homology"/>
<accession>Q6FLQ6</accession>
<reference key="1">
    <citation type="journal article" date="2004" name="Nature">
        <title>Genome evolution in yeasts.</title>
        <authorList>
            <person name="Dujon B."/>
            <person name="Sherman D."/>
            <person name="Fischer G."/>
            <person name="Durrens P."/>
            <person name="Casaregola S."/>
            <person name="Lafontaine I."/>
            <person name="de Montigny J."/>
            <person name="Marck C."/>
            <person name="Neuveglise C."/>
            <person name="Talla E."/>
            <person name="Goffard N."/>
            <person name="Frangeul L."/>
            <person name="Aigle M."/>
            <person name="Anthouard V."/>
            <person name="Babour A."/>
            <person name="Barbe V."/>
            <person name="Barnay S."/>
            <person name="Blanchin S."/>
            <person name="Beckerich J.-M."/>
            <person name="Beyne E."/>
            <person name="Bleykasten C."/>
            <person name="Boisrame A."/>
            <person name="Boyer J."/>
            <person name="Cattolico L."/>
            <person name="Confanioleri F."/>
            <person name="de Daruvar A."/>
            <person name="Despons L."/>
            <person name="Fabre E."/>
            <person name="Fairhead C."/>
            <person name="Ferry-Dumazet H."/>
            <person name="Groppi A."/>
            <person name="Hantraye F."/>
            <person name="Hennequin C."/>
            <person name="Jauniaux N."/>
            <person name="Joyet P."/>
            <person name="Kachouri R."/>
            <person name="Kerrest A."/>
            <person name="Koszul R."/>
            <person name="Lemaire M."/>
            <person name="Lesur I."/>
            <person name="Ma L."/>
            <person name="Muller H."/>
            <person name="Nicaud J.-M."/>
            <person name="Nikolski M."/>
            <person name="Oztas S."/>
            <person name="Ozier-Kalogeropoulos O."/>
            <person name="Pellenz S."/>
            <person name="Potier S."/>
            <person name="Richard G.-F."/>
            <person name="Straub M.-L."/>
            <person name="Suleau A."/>
            <person name="Swennen D."/>
            <person name="Tekaia F."/>
            <person name="Wesolowski-Louvel M."/>
            <person name="Westhof E."/>
            <person name="Wirth B."/>
            <person name="Zeniou-Meyer M."/>
            <person name="Zivanovic Y."/>
            <person name="Bolotin-Fukuhara M."/>
            <person name="Thierry A."/>
            <person name="Bouchier C."/>
            <person name="Caudron B."/>
            <person name="Scarpelli C."/>
            <person name="Gaillardin C."/>
            <person name="Weissenbach J."/>
            <person name="Wincker P."/>
            <person name="Souciet J.-L."/>
        </authorList>
    </citation>
    <scope>NUCLEOTIDE SEQUENCE [LARGE SCALE GENOMIC DNA]</scope>
    <source>
        <strain>ATCC 2001 / BCRC 20586 / JCM 3761 / NBRC 0622 / NRRL Y-65 / CBS 138</strain>
    </source>
</reference>
<comment type="function">
    <text evidence="1">Involved in pre-mRNA splicing and cell cycle control.</text>
</comment>
<comment type="subunit">
    <text evidence="1">Associated with the spliceosome.</text>
</comment>
<comment type="subcellular location">
    <subcellularLocation>
        <location evidence="1">Nucleus</location>
    </subcellularLocation>
</comment>
<comment type="similarity">
    <text evidence="2">Belongs to the RSE1 family.</text>
</comment>
<keyword id="KW-0507">mRNA processing</keyword>
<keyword id="KW-0508">mRNA splicing</keyword>
<keyword id="KW-0539">Nucleus</keyword>
<keyword id="KW-1185">Reference proteome</keyword>
<keyword id="KW-0747">Spliceosome</keyword>
<dbReference type="EMBL" id="CR380958">
    <property type="protein sequence ID" value="CAG61808.1"/>
    <property type="molecule type" value="Genomic_DNA"/>
</dbReference>
<dbReference type="RefSeq" id="XP_448838.1">
    <property type="nucleotide sequence ID" value="XM_448838.1"/>
</dbReference>
<dbReference type="SMR" id="Q6FLQ6"/>
<dbReference type="FunCoup" id="Q6FLQ6">
    <property type="interactions" value="1429"/>
</dbReference>
<dbReference type="STRING" id="284593.Q6FLQ6"/>
<dbReference type="EnsemblFungi" id="CAGL0L01507g-T">
    <property type="protein sequence ID" value="CAGL0L01507g-T-p1"/>
    <property type="gene ID" value="CAGL0L01507g"/>
</dbReference>
<dbReference type="KEGG" id="cgr:2890878"/>
<dbReference type="CGD" id="CAL0136188">
    <property type="gene designation" value="CAGL0L01507g"/>
</dbReference>
<dbReference type="VEuPathDB" id="FungiDB:CAGL0L01507g"/>
<dbReference type="eggNOG" id="KOG1898">
    <property type="taxonomic scope" value="Eukaryota"/>
</dbReference>
<dbReference type="HOGENOM" id="CLU_003246_0_0_1"/>
<dbReference type="InParanoid" id="Q6FLQ6"/>
<dbReference type="OMA" id="IANDICT"/>
<dbReference type="Proteomes" id="UP000002428">
    <property type="component" value="Chromosome L"/>
</dbReference>
<dbReference type="GO" id="GO:0005681">
    <property type="term" value="C:spliceosomal complex"/>
    <property type="evidence" value="ECO:0007669"/>
    <property type="project" value="UniProtKB-KW"/>
</dbReference>
<dbReference type="GO" id="GO:0003676">
    <property type="term" value="F:nucleic acid binding"/>
    <property type="evidence" value="ECO:0007669"/>
    <property type="project" value="InterPro"/>
</dbReference>
<dbReference type="GO" id="GO:0006397">
    <property type="term" value="P:mRNA processing"/>
    <property type="evidence" value="ECO:0007669"/>
    <property type="project" value="UniProtKB-KW"/>
</dbReference>
<dbReference type="GO" id="GO:0008380">
    <property type="term" value="P:RNA splicing"/>
    <property type="evidence" value="ECO:0007669"/>
    <property type="project" value="UniProtKB-KW"/>
</dbReference>
<dbReference type="Gene3D" id="2.130.10.10">
    <property type="entry name" value="YVTN repeat-like/Quinoprotein amine dehydrogenase"/>
    <property type="match status" value="3"/>
</dbReference>
<dbReference type="InterPro" id="IPR004871">
    <property type="entry name" value="Cleavage/polyA-sp_fac_asu_C"/>
</dbReference>
<dbReference type="InterPro" id="IPR050358">
    <property type="entry name" value="RSE1/DDB1/CFT1/CPSF1"/>
</dbReference>
<dbReference type="InterPro" id="IPR015943">
    <property type="entry name" value="WD40/YVTN_repeat-like_dom_sf"/>
</dbReference>
<dbReference type="InterPro" id="IPR036322">
    <property type="entry name" value="WD40_repeat_dom_sf"/>
</dbReference>
<dbReference type="PANTHER" id="PTHR10644">
    <property type="entry name" value="DNA REPAIR/RNA PROCESSING CPSF FAMILY"/>
    <property type="match status" value="1"/>
</dbReference>
<dbReference type="Pfam" id="PF23726">
    <property type="entry name" value="Beta-prop_RSE1_2nd"/>
    <property type="match status" value="1"/>
</dbReference>
<dbReference type="Pfam" id="PF03178">
    <property type="entry name" value="CPSF_A"/>
    <property type="match status" value="1"/>
</dbReference>
<dbReference type="SUPFAM" id="SSF50978">
    <property type="entry name" value="WD40 repeat-like"/>
    <property type="match status" value="1"/>
</dbReference>
<feature type="chain" id="PRO_0000218628" description="Pre-mRNA-splicing factor RSE1">
    <location>
        <begin position="1"/>
        <end position="1296"/>
    </location>
</feature>
<name>RSE1_CANGA</name>
<gene>
    <name type="primary">RSE1</name>
    <name type="ordered locus">CAGL0L01507g</name>
</gene>